<sequence>MRLYACCGLLLCPAYPQHFAHGYVDKIPGYPGRAGTLTGLHPMQVCRCRRPPHPVTFRRSSSTRCGFGAAPAFVCGRPVTGAARPDGGRM</sequence>
<geneLocation type="plasmid">
    <name>pO157</name>
</geneLocation>
<gene>
    <name type="primary">yuaZ</name>
    <name type="ordered locus">L7070</name>
</gene>
<organism>
    <name type="scientific">Escherichia coli O157:H7</name>
    <dbReference type="NCBI Taxonomy" id="83334"/>
    <lineage>
        <taxon>Bacteria</taxon>
        <taxon>Pseudomonadati</taxon>
        <taxon>Pseudomonadota</taxon>
        <taxon>Gammaproteobacteria</taxon>
        <taxon>Enterobacterales</taxon>
        <taxon>Enterobacteriaceae</taxon>
        <taxon>Escherichia</taxon>
    </lineage>
</organism>
<accession>Q9ZGS5</accession>
<protein>
    <recommendedName>
        <fullName>Uncharacterized protein YuaZ</fullName>
    </recommendedName>
</protein>
<reference key="1">
    <citation type="journal article" date="1998" name="Nucleic Acids Res.">
        <title>The complete DNA sequence and analysis of the large virulence plasmid of Escherichia coli O157:H7.</title>
        <authorList>
            <person name="Burland V."/>
            <person name="Shao Y."/>
            <person name="Perna N.T."/>
            <person name="Plunkett G. III"/>
            <person name="Sofia H.J."/>
            <person name="Blattner F.R."/>
        </authorList>
    </citation>
    <scope>NUCLEOTIDE SEQUENCE [LARGE SCALE GENOMIC DNA]</scope>
    <source>
        <strain>O157:H7 / EDL933 / ATCC 700927 / EHEC</strain>
    </source>
</reference>
<proteinExistence type="predicted"/>
<keyword id="KW-0614">Plasmid</keyword>
<feature type="chain" id="PRO_0000262318" description="Uncharacterized protein YuaZ">
    <location>
        <begin position="1"/>
        <end position="90"/>
    </location>
</feature>
<dbReference type="EMBL" id="AF074613">
    <property type="protein sequence ID" value="AAC70138.1"/>
    <property type="molecule type" value="Genomic_DNA"/>
</dbReference>
<dbReference type="PIR" id="T42170">
    <property type="entry name" value="T42170"/>
</dbReference>
<dbReference type="KEGG" id="ece:Z_L7070"/>
<dbReference type="Proteomes" id="UP000002519">
    <property type="component" value="Plasmid pO157"/>
</dbReference>
<dbReference type="InterPro" id="IPR016388">
    <property type="entry name" value="Put_partitioning_SopC"/>
</dbReference>
<dbReference type="PIRSF" id="PIRSF003278">
    <property type="entry name" value="Partitioning_SopC"/>
    <property type="match status" value="1"/>
</dbReference>
<name>YUAZ_ECO57</name>